<name>IRC22_CANGA</name>
<evidence type="ECO:0000250" key="1"/>
<evidence type="ECO:0000255" key="2"/>
<evidence type="ECO:0000305" key="3"/>
<keyword id="KW-0256">Endoplasmic reticulum</keyword>
<keyword id="KW-0472">Membrane</keyword>
<keyword id="KW-1185">Reference proteome</keyword>
<keyword id="KW-0732">Signal</keyword>
<keyword id="KW-0812">Transmembrane</keyword>
<keyword id="KW-1133">Transmembrane helix</keyword>
<sequence>MKFLHIGLMTLMAGVSNVLAQEEANAEDVMVNIEGQDMTMEEAEAYMAAKEKMGGAQQQREMINLQVNYDLLEEPFADLQDFIVFEVGETATLNYTIHNLDQEETYSIVGVSGAVLSEVDQRNVANLTETNITEIVLAPNATGTLRHKIDMNLTEGRYYILPLLHVKDKNEVKRVMSNTFKLDLINQSISIFDPSFLSIIAVLIALVGGTVYLYSNVVAPPKKIKKKEAIPAKIDESWLPDVHKK</sequence>
<protein>
    <recommendedName>
        <fullName>Increased recombination centers protein 22</fullName>
    </recommendedName>
</protein>
<gene>
    <name type="primary">IRC22</name>
    <name type="ordered locus">CAGL0L02343g</name>
</gene>
<dbReference type="EMBL" id="CR380958">
    <property type="protein sequence ID" value="CAG61842.1"/>
    <property type="molecule type" value="Genomic_DNA"/>
</dbReference>
<dbReference type="RefSeq" id="XP_448872.1">
    <property type="nucleotide sequence ID" value="XM_448872.1"/>
</dbReference>
<dbReference type="FunCoup" id="Q6FLM2">
    <property type="interactions" value="41"/>
</dbReference>
<dbReference type="STRING" id="284593.Q6FLM2"/>
<dbReference type="EnsemblFungi" id="CAGL0L02343g-T">
    <property type="protein sequence ID" value="CAGL0L02343g-T-p1"/>
    <property type="gene ID" value="CAGL0L02343g"/>
</dbReference>
<dbReference type="KEGG" id="cgr:2890902"/>
<dbReference type="CGD" id="CAL0136006">
    <property type="gene designation" value="CAGL0L02343g"/>
</dbReference>
<dbReference type="VEuPathDB" id="FungiDB:CAGL0L02343g"/>
<dbReference type="eggNOG" id="ENOG502S3VP">
    <property type="taxonomic scope" value="Eukaryota"/>
</dbReference>
<dbReference type="HOGENOM" id="CLU_078554_1_0_1"/>
<dbReference type="InParanoid" id="Q6FLM2"/>
<dbReference type="OMA" id="WLPETYK"/>
<dbReference type="Proteomes" id="UP000002428">
    <property type="component" value="Chromosome L"/>
</dbReference>
<dbReference type="GO" id="GO:0005789">
    <property type="term" value="C:endoplasmic reticulum membrane"/>
    <property type="evidence" value="ECO:0007669"/>
    <property type="project" value="UniProtKB-SubCell"/>
</dbReference>
<dbReference type="InterPro" id="IPR005595">
    <property type="entry name" value="TRAP_alpha"/>
</dbReference>
<dbReference type="Pfam" id="PF03896">
    <property type="entry name" value="TRAP_alpha"/>
    <property type="match status" value="1"/>
</dbReference>
<feature type="signal peptide" evidence="2">
    <location>
        <begin position="1"/>
        <end position="20"/>
    </location>
</feature>
<feature type="chain" id="PRO_0000399075" description="Increased recombination centers protein 22">
    <location>
        <begin position="21"/>
        <end position="245"/>
    </location>
</feature>
<feature type="topological domain" description="Lumenal" evidence="2">
    <location>
        <begin position="21"/>
        <end position="188"/>
    </location>
</feature>
<feature type="transmembrane region" description="Helical" evidence="2">
    <location>
        <begin position="189"/>
        <end position="209"/>
    </location>
</feature>
<feature type="topological domain" description="Cytoplasmic" evidence="2">
    <location>
        <begin position="210"/>
        <end position="245"/>
    </location>
</feature>
<reference key="1">
    <citation type="journal article" date="2004" name="Nature">
        <title>Genome evolution in yeasts.</title>
        <authorList>
            <person name="Dujon B."/>
            <person name="Sherman D."/>
            <person name="Fischer G."/>
            <person name="Durrens P."/>
            <person name="Casaregola S."/>
            <person name="Lafontaine I."/>
            <person name="de Montigny J."/>
            <person name="Marck C."/>
            <person name="Neuveglise C."/>
            <person name="Talla E."/>
            <person name="Goffard N."/>
            <person name="Frangeul L."/>
            <person name="Aigle M."/>
            <person name="Anthouard V."/>
            <person name="Babour A."/>
            <person name="Barbe V."/>
            <person name="Barnay S."/>
            <person name="Blanchin S."/>
            <person name="Beckerich J.-M."/>
            <person name="Beyne E."/>
            <person name="Bleykasten C."/>
            <person name="Boisrame A."/>
            <person name="Boyer J."/>
            <person name="Cattolico L."/>
            <person name="Confanioleri F."/>
            <person name="de Daruvar A."/>
            <person name="Despons L."/>
            <person name="Fabre E."/>
            <person name="Fairhead C."/>
            <person name="Ferry-Dumazet H."/>
            <person name="Groppi A."/>
            <person name="Hantraye F."/>
            <person name="Hennequin C."/>
            <person name="Jauniaux N."/>
            <person name="Joyet P."/>
            <person name="Kachouri R."/>
            <person name="Kerrest A."/>
            <person name="Koszul R."/>
            <person name="Lemaire M."/>
            <person name="Lesur I."/>
            <person name="Ma L."/>
            <person name="Muller H."/>
            <person name="Nicaud J.-M."/>
            <person name="Nikolski M."/>
            <person name="Oztas S."/>
            <person name="Ozier-Kalogeropoulos O."/>
            <person name="Pellenz S."/>
            <person name="Potier S."/>
            <person name="Richard G.-F."/>
            <person name="Straub M.-L."/>
            <person name="Suleau A."/>
            <person name="Swennen D."/>
            <person name="Tekaia F."/>
            <person name="Wesolowski-Louvel M."/>
            <person name="Westhof E."/>
            <person name="Wirth B."/>
            <person name="Zeniou-Meyer M."/>
            <person name="Zivanovic Y."/>
            <person name="Bolotin-Fukuhara M."/>
            <person name="Thierry A."/>
            <person name="Bouchier C."/>
            <person name="Caudron B."/>
            <person name="Scarpelli C."/>
            <person name="Gaillardin C."/>
            <person name="Weissenbach J."/>
            <person name="Wincker P."/>
            <person name="Souciet J.-L."/>
        </authorList>
    </citation>
    <scope>NUCLEOTIDE SEQUENCE [LARGE SCALE GENOMIC DNA]</scope>
    <source>
        <strain>ATCC 2001 / BCRC 20586 / JCM 3761 / NBRC 0622 / NRRL Y-65 / CBS 138</strain>
    </source>
</reference>
<organism>
    <name type="scientific">Candida glabrata (strain ATCC 2001 / BCRC 20586 / JCM 3761 / NBRC 0622 / NRRL Y-65 / CBS 138)</name>
    <name type="common">Yeast</name>
    <name type="synonym">Nakaseomyces glabratus</name>
    <dbReference type="NCBI Taxonomy" id="284593"/>
    <lineage>
        <taxon>Eukaryota</taxon>
        <taxon>Fungi</taxon>
        <taxon>Dikarya</taxon>
        <taxon>Ascomycota</taxon>
        <taxon>Saccharomycotina</taxon>
        <taxon>Saccharomycetes</taxon>
        <taxon>Saccharomycetales</taxon>
        <taxon>Saccharomycetaceae</taxon>
        <taxon>Nakaseomyces</taxon>
    </lineage>
</organism>
<proteinExistence type="inferred from homology"/>
<comment type="function">
    <text>Is probably involved in a pathway contributing to genomic integrity.</text>
</comment>
<comment type="subcellular location">
    <subcellularLocation>
        <location evidence="1">Endoplasmic reticulum membrane</location>
        <topology evidence="1">Single-pass type I membrane protein</topology>
    </subcellularLocation>
</comment>
<comment type="similarity">
    <text evidence="3">Belongs to the IRC22 family.</text>
</comment>
<accession>Q6FLM2</accession>